<gene>
    <name evidence="1" type="primary">rpsK</name>
    <name type="ordered locus">VV0397</name>
</gene>
<evidence type="ECO:0000255" key="1">
    <source>
        <dbReference type="HAMAP-Rule" id="MF_01310"/>
    </source>
</evidence>
<evidence type="ECO:0000305" key="2"/>
<comment type="function">
    <text evidence="1">Located on the platform of the 30S subunit, it bridges several disparate RNA helices of the 16S rRNA. Forms part of the Shine-Dalgarno cleft in the 70S ribosome.</text>
</comment>
<comment type="subunit">
    <text evidence="1">Part of the 30S ribosomal subunit. Interacts with proteins S7 and S18. Binds to IF-3.</text>
</comment>
<comment type="similarity">
    <text evidence="1">Belongs to the universal ribosomal protein uS11 family.</text>
</comment>
<accession>Q7MPG6</accession>
<feature type="chain" id="PRO_0000123256" description="Small ribosomal subunit protein uS11">
    <location>
        <begin position="1"/>
        <end position="129"/>
    </location>
</feature>
<reference key="1">
    <citation type="journal article" date="2003" name="Genome Res.">
        <title>Comparative genome analysis of Vibrio vulnificus, a marine pathogen.</title>
        <authorList>
            <person name="Chen C.-Y."/>
            <person name="Wu K.-M."/>
            <person name="Chang Y.-C."/>
            <person name="Chang C.-H."/>
            <person name="Tsai H.-C."/>
            <person name="Liao T.-L."/>
            <person name="Liu Y.-M."/>
            <person name="Chen H.-J."/>
            <person name="Shen A.B.-T."/>
            <person name="Li J.-C."/>
            <person name="Su T.-L."/>
            <person name="Shao C.-P."/>
            <person name="Lee C.-T."/>
            <person name="Hor L.-I."/>
            <person name="Tsai S.-F."/>
        </authorList>
    </citation>
    <scope>NUCLEOTIDE SEQUENCE [LARGE SCALE GENOMIC DNA]</scope>
    <source>
        <strain>YJ016</strain>
    </source>
</reference>
<organism>
    <name type="scientific">Vibrio vulnificus (strain YJ016)</name>
    <dbReference type="NCBI Taxonomy" id="196600"/>
    <lineage>
        <taxon>Bacteria</taxon>
        <taxon>Pseudomonadati</taxon>
        <taxon>Pseudomonadota</taxon>
        <taxon>Gammaproteobacteria</taxon>
        <taxon>Vibrionales</taxon>
        <taxon>Vibrionaceae</taxon>
        <taxon>Vibrio</taxon>
    </lineage>
</organism>
<protein>
    <recommendedName>
        <fullName evidence="1">Small ribosomal subunit protein uS11</fullName>
    </recommendedName>
    <alternativeName>
        <fullName evidence="2">30S ribosomal protein S11</fullName>
    </alternativeName>
</protein>
<proteinExistence type="inferred from homology"/>
<keyword id="KW-0687">Ribonucleoprotein</keyword>
<keyword id="KW-0689">Ribosomal protein</keyword>
<keyword id="KW-0694">RNA-binding</keyword>
<keyword id="KW-0699">rRNA-binding</keyword>
<dbReference type="EMBL" id="BA000037">
    <property type="protein sequence ID" value="BAC93161.1"/>
    <property type="molecule type" value="Genomic_DNA"/>
</dbReference>
<dbReference type="RefSeq" id="WP_001118870.1">
    <property type="nucleotide sequence ID" value="NC_005139.1"/>
</dbReference>
<dbReference type="SMR" id="Q7MPG6"/>
<dbReference type="STRING" id="672.VV93_v1c03690"/>
<dbReference type="GeneID" id="97171204"/>
<dbReference type="KEGG" id="vvy:VV0397"/>
<dbReference type="eggNOG" id="COG0100">
    <property type="taxonomic scope" value="Bacteria"/>
</dbReference>
<dbReference type="HOGENOM" id="CLU_072439_5_0_6"/>
<dbReference type="Proteomes" id="UP000002675">
    <property type="component" value="Chromosome I"/>
</dbReference>
<dbReference type="GO" id="GO:1990904">
    <property type="term" value="C:ribonucleoprotein complex"/>
    <property type="evidence" value="ECO:0007669"/>
    <property type="project" value="UniProtKB-KW"/>
</dbReference>
<dbReference type="GO" id="GO:0005840">
    <property type="term" value="C:ribosome"/>
    <property type="evidence" value="ECO:0007669"/>
    <property type="project" value="UniProtKB-KW"/>
</dbReference>
<dbReference type="GO" id="GO:0019843">
    <property type="term" value="F:rRNA binding"/>
    <property type="evidence" value="ECO:0007669"/>
    <property type="project" value="UniProtKB-UniRule"/>
</dbReference>
<dbReference type="GO" id="GO:0003735">
    <property type="term" value="F:structural constituent of ribosome"/>
    <property type="evidence" value="ECO:0007669"/>
    <property type="project" value="InterPro"/>
</dbReference>
<dbReference type="GO" id="GO:0006412">
    <property type="term" value="P:translation"/>
    <property type="evidence" value="ECO:0007669"/>
    <property type="project" value="UniProtKB-UniRule"/>
</dbReference>
<dbReference type="FunFam" id="3.30.420.80:FF:000001">
    <property type="entry name" value="30S ribosomal protein S11"/>
    <property type="match status" value="1"/>
</dbReference>
<dbReference type="Gene3D" id="3.30.420.80">
    <property type="entry name" value="Ribosomal protein S11"/>
    <property type="match status" value="1"/>
</dbReference>
<dbReference type="HAMAP" id="MF_01310">
    <property type="entry name" value="Ribosomal_uS11"/>
    <property type="match status" value="1"/>
</dbReference>
<dbReference type="InterPro" id="IPR001971">
    <property type="entry name" value="Ribosomal_uS11"/>
</dbReference>
<dbReference type="InterPro" id="IPR019981">
    <property type="entry name" value="Ribosomal_uS11_bac-type"/>
</dbReference>
<dbReference type="InterPro" id="IPR018102">
    <property type="entry name" value="Ribosomal_uS11_CS"/>
</dbReference>
<dbReference type="InterPro" id="IPR036967">
    <property type="entry name" value="Ribosomal_uS11_sf"/>
</dbReference>
<dbReference type="NCBIfam" id="NF003698">
    <property type="entry name" value="PRK05309.1"/>
    <property type="match status" value="1"/>
</dbReference>
<dbReference type="NCBIfam" id="TIGR03632">
    <property type="entry name" value="uS11_bact"/>
    <property type="match status" value="1"/>
</dbReference>
<dbReference type="PANTHER" id="PTHR11759">
    <property type="entry name" value="40S RIBOSOMAL PROTEIN S14/30S RIBOSOMAL PROTEIN S11"/>
    <property type="match status" value="1"/>
</dbReference>
<dbReference type="Pfam" id="PF00411">
    <property type="entry name" value="Ribosomal_S11"/>
    <property type="match status" value="1"/>
</dbReference>
<dbReference type="PIRSF" id="PIRSF002131">
    <property type="entry name" value="Ribosomal_S11"/>
    <property type="match status" value="1"/>
</dbReference>
<dbReference type="SUPFAM" id="SSF53137">
    <property type="entry name" value="Translational machinery components"/>
    <property type="match status" value="1"/>
</dbReference>
<dbReference type="PROSITE" id="PS00054">
    <property type="entry name" value="RIBOSOMAL_S11"/>
    <property type="match status" value="1"/>
</dbReference>
<name>RS11_VIBVY</name>
<sequence length="129" mass="13890">MAKQPTRARKRVRKQVADGVAHIHASFNNTIVTITDRQGNALAWATAGGSGFRGSRKSTPFAAQVAAERCAEMAKEYGLKNLEVMVKGPGPGRESTVRALNAAGFRITNIVDATPIPHNGCRPPKKRRV</sequence>